<accession>A8AQN6</accession>
<proteinExistence type="inferred from homology"/>
<organism>
    <name type="scientific">Citrobacter koseri (strain ATCC BAA-895 / CDC 4225-83 / SGSC4696)</name>
    <dbReference type="NCBI Taxonomy" id="290338"/>
    <lineage>
        <taxon>Bacteria</taxon>
        <taxon>Pseudomonadati</taxon>
        <taxon>Pseudomonadota</taxon>
        <taxon>Gammaproteobacteria</taxon>
        <taxon>Enterobacterales</taxon>
        <taxon>Enterobacteriaceae</taxon>
        <taxon>Citrobacter</taxon>
    </lineage>
</organism>
<reference key="1">
    <citation type="submission" date="2007-08" db="EMBL/GenBank/DDBJ databases">
        <authorList>
            <consortium name="The Citrobacter koseri Genome Sequencing Project"/>
            <person name="McClelland M."/>
            <person name="Sanderson E.K."/>
            <person name="Porwollik S."/>
            <person name="Spieth J."/>
            <person name="Clifton W.S."/>
            <person name="Latreille P."/>
            <person name="Courtney L."/>
            <person name="Wang C."/>
            <person name="Pepin K."/>
            <person name="Bhonagiri V."/>
            <person name="Nash W."/>
            <person name="Johnson M."/>
            <person name="Thiruvilangam P."/>
            <person name="Wilson R."/>
        </authorList>
    </citation>
    <scope>NUCLEOTIDE SEQUENCE [LARGE SCALE GENOMIC DNA]</scope>
    <source>
        <strain>ATCC BAA-895 / CDC 4225-83 / SGSC4696</strain>
    </source>
</reference>
<comment type="similarity">
    <text evidence="1">Belongs to the SlyX family.</text>
</comment>
<evidence type="ECO:0000255" key="1">
    <source>
        <dbReference type="HAMAP-Rule" id="MF_00715"/>
    </source>
</evidence>
<evidence type="ECO:0000256" key="2">
    <source>
        <dbReference type="SAM" id="MobiDB-lite"/>
    </source>
</evidence>
<feature type="chain" id="PRO_1000045712" description="Protein SlyX">
    <location>
        <begin position="1"/>
        <end position="72"/>
    </location>
</feature>
<feature type="region of interest" description="Disordered" evidence="2">
    <location>
        <begin position="52"/>
        <end position="72"/>
    </location>
</feature>
<feature type="compositionally biased region" description="Polar residues" evidence="2">
    <location>
        <begin position="55"/>
        <end position="65"/>
    </location>
</feature>
<dbReference type="EMBL" id="CP000822">
    <property type="protein sequence ID" value="ABV15799.1"/>
    <property type="molecule type" value="Genomic_DNA"/>
</dbReference>
<dbReference type="RefSeq" id="WP_012135441.1">
    <property type="nucleotide sequence ID" value="NC_009792.1"/>
</dbReference>
<dbReference type="SMR" id="A8AQN6"/>
<dbReference type="STRING" id="290338.CKO_04754"/>
<dbReference type="GeneID" id="45138266"/>
<dbReference type="KEGG" id="cko:CKO_04754"/>
<dbReference type="HOGENOM" id="CLU_180796_4_2_6"/>
<dbReference type="OrthoDB" id="5771733at2"/>
<dbReference type="Proteomes" id="UP000008148">
    <property type="component" value="Chromosome"/>
</dbReference>
<dbReference type="Gene3D" id="1.20.5.300">
    <property type="match status" value="1"/>
</dbReference>
<dbReference type="HAMAP" id="MF_00715">
    <property type="entry name" value="SlyX"/>
    <property type="match status" value="1"/>
</dbReference>
<dbReference type="InterPro" id="IPR007236">
    <property type="entry name" value="SlyX"/>
</dbReference>
<dbReference type="NCBIfam" id="NF002750">
    <property type="entry name" value="PRK02793.1"/>
    <property type="match status" value="1"/>
</dbReference>
<dbReference type="PANTHER" id="PTHR36508">
    <property type="entry name" value="PROTEIN SLYX"/>
    <property type="match status" value="1"/>
</dbReference>
<dbReference type="PANTHER" id="PTHR36508:SF1">
    <property type="entry name" value="PROTEIN SLYX"/>
    <property type="match status" value="1"/>
</dbReference>
<dbReference type="Pfam" id="PF04102">
    <property type="entry name" value="SlyX"/>
    <property type="match status" value="1"/>
</dbReference>
<keyword id="KW-1185">Reference proteome</keyword>
<protein>
    <recommendedName>
        <fullName evidence="1">Protein SlyX</fullName>
    </recommendedName>
</protein>
<name>SLYX_CITK8</name>
<sequence>MQDITMEARLAELESRLAFQEITIEELNVTVTAHEMEMAKLRDHLRLLTEKLKASQPSNIASQAEETPPPHY</sequence>
<gene>
    <name evidence="1" type="primary">slyX</name>
    <name type="ordered locus">CKO_04754</name>
</gene>